<sequence length="338" mass="37373">MRLYELSFAQIEDFFYKLAEVKDIIKDSGLMEFLPELKKLDSTIQTGTTRVKHAFPIFQKGGVVMDITNVQQAQIAEEAGAVAVMVLDKLPYDVRKSGGVARMADPKIIGEVMNSITIPVMAKVRIGHYYEAKLLEALGVDMIDESEVLTPADEEHHINKWEFSVPFVNGARNLGEALRRTAEGASMIRTKGEAGTGNVSEAVKHMKIINSEIRSLISMSEEDRVKKAREYQVPYQLVELTAKIKRLPIVNFAAGGIATPADAALMMWLGADGLFVGSGIFKSQDPDERAKAVVLAAACWEYPEIVLEAQKMISEQKSMMGIDIKSLKPEELLQVRGL</sequence>
<organism>
    <name type="scientific">Saccharolobus islandicus (strain M.16.4 / Kamchatka #3)</name>
    <name type="common">Sulfolobus islandicus</name>
    <dbReference type="NCBI Taxonomy" id="426118"/>
    <lineage>
        <taxon>Archaea</taxon>
        <taxon>Thermoproteota</taxon>
        <taxon>Thermoprotei</taxon>
        <taxon>Sulfolobales</taxon>
        <taxon>Sulfolobaceae</taxon>
        <taxon>Saccharolobus</taxon>
    </lineage>
</organism>
<accession>C4KHU3</accession>
<comment type="function">
    <text evidence="1">Catalyzes the formation of pyridoxal 5'-phosphate from ribose 5-phosphate (RBP), glyceraldehyde 3-phosphate (G3P) and ammonia. The ammonia is provided by the PdxT subunit. Can also use ribulose 5-phosphate and dihydroxyacetone phosphate as substrates, resulting from enzyme-catalyzed isomerization of RBP and G3P, respectively.</text>
</comment>
<comment type="catalytic activity">
    <reaction evidence="1">
        <text>aldehydo-D-ribose 5-phosphate + D-glyceraldehyde 3-phosphate + L-glutamine = pyridoxal 5'-phosphate + L-glutamate + phosphate + 3 H2O + H(+)</text>
        <dbReference type="Rhea" id="RHEA:31507"/>
        <dbReference type="ChEBI" id="CHEBI:15377"/>
        <dbReference type="ChEBI" id="CHEBI:15378"/>
        <dbReference type="ChEBI" id="CHEBI:29985"/>
        <dbReference type="ChEBI" id="CHEBI:43474"/>
        <dbReference type="ChEBI" id="CHEBI:58273"/>
        <dbReference type="ChEBI" id="CHEBI:58359"/>
        <dbReference type="ChEBI" id="CHEBI:59776"/>
        <dbReference type="ChEBI" id="CHEBI:597326"/>
        <dbReference type="EC" id="4.3.3.6"/>
    </reaction>
</comment>
<comment type="pathway">
    <text evidence="1">Cofactor biosynthesis; pyridoxal 5'-phosphate biosynthesis.</text>
</comment>
<comment type="subunit">
    <text evidence="1">In the presence of PdxT, forms a dodecamer of heterodimers.</text>
</comment>
<comment type="similarity">
    <text evidence="1">Belongs to the PdxS/SNZ family.</text>
</comment>
<protein>
    <recommendedName>
        <fullName evidence="1">Pyridoxal 5'-phosphate synthase subunit PdxS</fullName>
        <shortName evidence="1">PLP synthase subunit PdxS</shortName>
        <ecNumber evidence="1">4.3.3.6</ecNumber>
    </recommendedName>
    <alternativeName>
        <fullName evidence="1">Pdx1</fullName>
    </alternativeName>
</protein>
<name>PDXS_SACI6</name>
<proteinExistence type="inferred from homology"/>
<feature type="chain" id="PRO_1000216062" description="Pyridoxal 5'-phosphate synthase subunit PdxS">
    <location>
        <begin position="1"/>
        <end position="338"/>
    </location>
</feature>
<feature type="active site" description="Schiff-base intermediate with D-ribose 5-phosphate" evidence="1">
    <location>
        <position position="123"/>
    </location>
</feature>
<feature type="binding site" evidence="1">
    <location>
        <position position="66"/>
    </location>
    <ligand>
        <name>D-ribose 5-phosphate</name>
        <dbReference type="ChEBI" id="CHEBI:78346"/>
    </ligand>
</feature>
<feature type="binding site" evidence="1">
    <location>
        <position position="195"/>
    </location>
    <ligand>
        <name>D-ribose 5-phosphate</name>
        <dbReference type="ChEBI" id="CHEBI:78346"/>
    </ligand>
</feature>
<feature type="binding site" evidence="1">
    <location>
        <position position="207"/>
    </location>
    <ligand>
        <name>D-glyceraldehyde 3-phosphate</name>
        <dbReference type="ChEBI" id="CHEBI:59776"/>
    </ligand>
</feature>
<feature type="binding site" evidence="1">
    <location>
        <position position="256"/>
    </location>
    <ligand>
        <name>D-ribose 5-phosphate</name>
        <dbReference type="ChEBI" id="CHEBI:78346"/>
    </ligand>
</feature>
<feature type="binding site" evidence="1">
    <location>
        <begin position="277"/>
        <end position="278"/>
    </location>
    <ligand>
        <name>D-ribose 5-phosphate</name>
        <dbReference type="ChEBI" id="CHEBI:78346"/>
    </ligand>
</feature>
<reference key="1">
    <citation type="journal article" date="2009" name="Proc. Natl. Acad. Sci. U.S.A.">
        <title>Biogeography of the Sulfolobus islandicus pan-genome.</title>
        <authorList>
            <person name="Reno M.L."/>
            <person name="Held N.L."/>
            <person name="Fields C.J."/>
            <person name="Burke P.V."/>
            <person name="Whitaker R.J."/>
        </authorList>
    </citation>
    <scope>NUCLEOTIDE SEQUENCE [LARGE SCALE GENOMIC DNA]</scope>
    <source>
        <strain>M.16.4 / Kamchatka #3</strain>
    </source>
</reference>
<keyword id="KW-0456">Lyase</keyword>
<keyword id="KW-0663">Pyridoxal phosphate</keyword>
<keyword id="KW-0704">Schiff base</keyword>
<evidence type="ECO:0000255" key="1">
    <source>
        <dbReference type="HAMAP-Rule" id="MF_01824"/>
    </source>
</evidence>
<dbReference type="EC" id="4.3.3.6" evidence="1"/>
<dbReference type="EMBL" id="CP001402">
    <property type="protein sequence ID" value="ACR42157.1"/>
    <property type="molecule type" value="Genomic_DNA"/>
</dbReference>
<dbReference type="RefSeq" id="WP_012711553.1">
    <property type="nucleotide sequence ID" value="NC_012726.1"/>
</dbReference>
<dbReference type="SMR" id="C4KHU3"/>
<dbReference type="GeneID" id="15297947"/>
<dbReference type="GeneID" id="84061870"/>
<dbReference type="KEGG" id="sid:M164_1556"/>
<dbReference type="HOGENOM" id="CLU_055352_1_0_2"/>
<dbReference type="UniPathway" id="UPA00245"/>
<dbReference type="Proteomes" id="UP000001479">
    <property type="component" value="Chromosome"/>
</dbReference>
<dbReference type="GO" id="GO:0036381">
    <property type="term" value="F:pyridoxal 5'-phosphate synthase (glutamine hydrolysing) activity"/>
    <property type="evidence" value="ECO:0007669"/>
    <property type="project" value="UniProtKB-UniRule"/>
</dbReference>
<dbReference type="GO" id="GO:0006520">
    <property type="term" value="P:amino acid metabolic process"/>
    <property type="evidence" value="ECO:0007669"/>
    <property type="project" value="TreeGrafter"/>
</dbReference>
<dbReference type="GO" id="GO:0042823">
    <property type="term" value="P:pyridoxal phosphate biosynthetic process"/>
    <property type="evidence" value="ECO:0007669"/>
    <property type="project" value="UniProtKB-UniRule"/>
</dbReference>
<dbReference type="GO" id="GO:0008615">
    <property type="term" value="P:pyridoxine biosynthetic process"/>
    <property type="evidence" value="ECO:0007669"/>
    <property type="project" value="TreeGrafter"/>
</dbReference>
<dbReference type="CDD" id="cd04727">
    <property type="entry name" value="pdxS"/>
    <property type="match status" value="1"/>
</dbReference>
<dbReference type="FunFam" id="3.20.20.70:FF:000001">
    <property type="entry name" value="Pyridoxine biosynthesis protein PDX1"/>
    <property type="match status" value="1"/>
</dbReference>
<dbReference type="Gene3D" id="3.20.20.70">
    <property type="entry name" value="Aldolase class I"/>
    <property type="match status" value="1"/>
</dbReference>
<dbReference type="HAMAP" id="MF_01824">
    <property type="entry name" value="PdxS"/>
    <property type="match status" value="1"/>
</dbReference>
<dbReference type="InterPro" id="IPR013785">
    <property type="entry name" value="Aldolase_TIM"/>
</dbReference>
<dbReference type="InterPro" id="IPR001852">
    <property type="entry name" value="PdxS/SNZ"/>
</dbReference>
<dbReference type="InterPro" id="IPR033755">
    <property type="entry name" value="PdxS/SNZ_N"/>
</dbReference>
<dbReference type="InterPro" id="IPR011060">
    <property type="entry name" value="RibuloseP-bd_barrel"/>
</dbReference>
<dbReference type="NCBIfam" id="NF003215">
    <property type="entry name" value="PRK04180.1"/>
    <property type="match status" value="1"/>
</dbReference>
<dbReference type="PANTHER" id="PTHR31829">
    <property type="entry name" value="PYRIDOXAL 5'-PHOSPHATE SYNTHASE SUBUNIT SNZ1-RELATED"/>
    <property type="match status" value="1"/>
</dbReference>
<dbReference type="PANTHER" id="PTHR31829:SF0">
    <property type="entry name" value="PYRIDOXAL 5'-PHOSPHATE SYNTHASE SUBUNIT SNZ1-RELATED"/>
    <property type="match status" value="1"/>
</dbReference>
<dbReference type="Pfam" id="PF01680">
    <property type="entry name" value="SOR_SNZ"/>
    <property type="match status" value="1"/>
</dbReference>
<dbReference type="PIRSF" id="PIRSF029271">
    <property type="entry name" value="Pdx1"/>
    <property type="match status" value="1"/>
</dbReference>
<dbReference type="SUPFAM" id="SSF51366">
    <property type="entry name" value="Ribulose-phoshate binding barrel"/>
    <property type="match status" value="1"/>
</dbReference>
<dbReference type="PROSITE" id="PS01235">
    <property type="entry name" value="PDXS_SNZ_1"/>
    <property type="match status" value="1"/>
</dbReference>
<dbReference type="PROSITE" id="PS51129">
    <property type="entry name" value="PDXS_SNZ_2"/>
    <property type="match status" value="1"/>
</dbReference>
<gene>
    <name evidence="1" type="primary">pdxS</name>
    <name type="ordered locus">M164_1556</name>
</gene>